<keyword id="KW-0167">Capsid protein</keyword>
<keyword id="KW-0175">Coiled coil</keyword>
<keyword id="KW-1015">Disulfide bond</keyword>
<keyword id="KW-0348">Hemagglutinin</keyword>
<keyword id="KW-1032">Host cell membrane</keyword>
<keyword id="KW-1035">Host cytoplasm</keyword>
<keyword id="KW-1037">Host cytoskeleton</keyword>
<keyword id="KW-1038">Host endoplasmic reticulum</keyword>
<keyword id="KW-1043">Host membrane</keyword>
<keyword id="KW-0945">Host-virus interaction</keyword>
<keyword id="KW-0472">Membrane</keyword>
<keyword id="KW-1152">Outer capsid protein</keyword>
<keyword id="KW-1161">Viral attachment to host cell</keyword>
<keyword id="KW-1162">Viral penetration into host cytoplasm</keyword>
<keyword id="KW-1173">Viral penetration via permeabilization of host membrane</keyword>
<keyword id="KW-0946">Virion</keyword>
<keyword id="KW-1160">Virus entry into host cell</keyword>
<organism>
    <name type="scientific">Rotavirus A (isolate RVA/Cat/Japan/FRV-1/1986/G3P3[9])</name>
    <name type="common">RV-A</name>
    <name type="synonym">Rotavirus A (isolate FRV1)</name>
    <dbReference type="NCBI Taxonomy" id="39009"/>
    <lineage>
        <taxon>Viruses</taxon>
        <taxon>Riboviria</taxon>
        <taxon>Orthornavirae</taxon>
        <taxon>Duplornaviricota</taxon>
        <taxon>Resentoviricetes</taxon>
        <taxon>Reovirales</taxon>
        <taxon>Sedoreoviridae</taxon>
        <taxon>Rotavirus</taxon>
        <taxon>Feline rotavirus</taxon>
    </lineage>
</organism>
<organismHost>
    <name type="scientific">Felis catus</name>
    <name type="common">Cat</name>
    <name type="synonym">Felis silvestris catus</name>
    <dbReference type="NCBI Taxonomy" id="9685"/>
</organismHost>
<dbReference type="EMBL" id="D10971">
    <property type="protein sequence ID" value="BAA01748.1"/>
    <property type="molecule type" value="mRNA"/>
</dbReference>
<dbReference type="PIR" id="JQ1639">
    <property type="entry name" value="JQ1639"/>
</dbReference>
<dbReference type="SMR" id="P39034"/>
<dbReference type="GO" id="GO:0044172">
    <property type="term" value="C:host cell endoplasmic reticulum-Golgi intermediate compartment"/>
    <property type="evidence" value="ECO:0007669"/>
    <property type="project" value="UniProtKB-SubCell"/>
</dbReference>
<dbReference type="GO" id="GO:0020002">
    <property type="term" value="C:host cell plasma membrane"/>
    <property type="evidence" value="ECO:0007669"/>
    <property type="project" value="UniProtKB-SubCell"/>
</dbReference>
<dbReference type="GO" id="GO:0044168">
    <property type="term" value="C:host cell rough endoplasmic reticulum"/>
    <property type="evidence" value="ECO:0007669"/>
    <property type="project" value="UniProtKB-SubCell"/>
</dbReference>
<dbReference type="GO" id="GO:0044163">
    <property type="term" value="C:host cytoskeleton"/>
    <property type="evidence" value="ECO:0007669"/>
    <property type="project" value="UniProtKB-SubCell"/>
</dbReference>
<dbReference type="GO" id="GO:0016020">
    <property type="term" value="C:membrane"/>
    <property type="evidence" value="ECO:0007669"/>
    <property type="project" value="UniProtKB-KW"/>
</dbReference>
<dbReference type="GO" id="GO:0039624">
    <property type="term" value="C:viral outer capsid"/>
    <property type="evidence" value="ECO:0007669"/>
    <property type="project" value="UniProtKB-UniRule"/>
</dbReference>
<dbReference type="GO" id="GO:0039665">
    <property type="term" value="P:permeabilization of host organelle membrane involved in viral entry into host cell"/>
    <property type="evidence" value="ECO:0007669"/>
    <property type="project" value="UniProtKB-UniRule"/>
</dbReference>
<dbReference type="GO" id="GO:0019062">
    <property type="term" value="P:virion attachment to host cell"/>
    <property type="evidence" value="ECO:0007669"/>
    <property type="project" value="UniProtKB-UniRule"/>
</dbReference>
<dbReference type="Gene3D" id="1.20.5.170">
    <property type="match status" value="1"/>
</dbReference>
<dbReference type="Gene3D" id="2.60.120.200">
    <property type="match status" value="1"/>
</dbReference>
<dbReference type="HAMAP" id="MF_04132">
    <property type="entry name" value="Rota_A_VP4"/>
    <property type="match status" value="1"/>
</dbReference>
<dbReference type="HAMAP" id="MF_04125">
    <property type="entry name" value="Rota_VP4"/>
    <property type="match status" value="1"/>
</dbReference>
<dbReference type="InterPro" id="IPR013320">
    <property type="entry name" value="ConA-like_dom_sf"/>
</dbReference>
<dbReference type="InterPro" id="IPR042546">
    <property type="entry name" value="Rota_A_VP4"/>
</dbReference>
<dbReference type="InterPro" id="IPR035330">
    <property type="entry name" value="Rota_VP4_MID"/>
</dbReference>
<dbReference type="InterPro" id="IPR038017">
    <property type="entry name" value="Rota_VP4_MID_sf"/>
</dbReference>
<dbReference type="InterPro" id="IPR000416">
    <property type="entry name" value="VP4_concanavalin-like"/>
</dbReference>
<dbReference type="InterPro" id="IPR035329">
    <property type="entry name" value="VP4_helical"/>
</dbReference>
<dbReference type="Pfam" id="PF17477">
    <property type="entry name" value="Rota_VP4_MID"/>
    <property type="match status" value="1"/>
</dbReference>
<dbReference type="Pfam" id="PF00426">
    <property type="entry name" value="VP4_haemagglut"/>
    <property type="match status" value="1"/>
</dbReference>
<dbReference type="Pfam" id="PF17478">
    <property type="entry name" value="VP4_helical"/>
    <property type="match status" value="1"/>
</dbReference>
<dbReference type="SUPFAM" id="SSF49899">
    <property type="entry name" value="Concanavalin A-like lectins/glucanases"/>
    <property type="match status" value="1"/>
</dbReference>
<dbReference type="SUPFAM" id="SSF111379">
    <property type="entry name" value="VP4 membrane interaction domain"/>
    <property type="match status" value="1"/>
</dbReference>
<proteinExistence type="evidence at transcript level"/>
<protein>
    <recommendedName>
        <fullName evidence="1">Outer capsid protein VP4</fullName>
    </recommendedName>
    <alternativeName>
        <fullName evidence="1">Hemagglutinin</fullName>
    </alternativeName>
    <component>
        <recommendedName>
            <fullName evidence="1">Outer capsid protein VP8*</fullName>
        </recommendedName>
    </component>
    <component>
        <recommendedName>
            <fullName evidence="1">Outer capsid protein VP5*</fullName>
        </recommendedName>
    </component>
</protein>
<feature type="chain" id="PRO_0000041036" description="Outer capsid protein VP4" evidence="1">
    <location>
        <begin position="1"/>
        <end position="775"/>
    </location>
</feature>
<feature type="chain" id="PRO_0000041037" description="Outer capsid protein VP8*" evidence="1">
    <location>
        <begin position="1"/>
        <end position="231"/>
    </location>
</feature>
<feature type="chain" id="PRO_0000041038" description="Outer capsid protein VP5*" evidence="1">
    <location>
        <begin position="248"/>
        <end position="775"/>
    </location>
</feature>
<feature type="region of interest" description="Spike head" evidence="1">
    <location>
        <begin position="65"/>
        <end position="224"/>
    </location>
</feature>
<feature type="region of interest" description="Spike body and stalk (antigen domain)" evidence="1">
    <location>
        <begin position="248"/>
        <end position="479"/>
    </location>
</feature>
<feature type="region of interest" description="Hydrophobic; possible role in virus entry into host cell" evidence="1">
    <location>
        <begin position="389"/>
        <end position="409"/>
    </location>
</feature>
<feature type="region of interest" description="Spike foot" evidence="1">
    <location>
        <begin position="510"/>
        <end position="775"/>
    </location>
</feature>
<feature type="coiled-coil region" evidence="1">
    <location>
        <begin position="484"/>
        <end position="511"/>
    </location>
</feature>
<feature type="short sequence motif" description="DGE motif; interaction with ITGA2/ITGB1 heterodimer" evidence="1">
    <location>
        <begin position="308"/>
        <end position="310"/>
    </location>
</feature>
<feature type="short sequence motif" description="YGL motif; interaction with ITGA4" evidence="1">
    <location>
        <begin position="448"/>
        <end position="450"/>
    </location>
</feature>
<feature type="site" description="Cleavage" evidence="1">
    <location>
        <begin position="231"/>
        <end position="232"/>
    </location>
</feature>
<feature type="site" description="Cleavage" evidence="1">
    <location>
        <begin position="241"/>
        <end position="242"/>
    </location>
</feature>
<feature type="site" description="Cleavage; associated with enhancement of infectivity" evidence="1">
    <location>
        <begin position="247"/>
        <end position="248"/>
    </location>
</feature>
<feature type="disulfide bond" evidence="1">
    <location>
        <begin position="318"/>
        <end position="380"/>
    </location>
</feature>
<evidence type="ECO:0000255" key="1">
    <source>
        <dbReference type="HAMAP-Rule" id="MF_04132"/>
    </source>
</evidence>
<accession>P39034</accession>
<name>VP4_ROTF1</name>
<reference key="1">
    <citation type="journal article" date="1992" name="J. Gen. Virol.">
        <title>A VP4 sequence highly conserved in human rotavirus strain AU-1 and feline rotavirus strain FRV-1.</title>
        <authorList>
            <person name="Isegawa Y."/>
            <person name="Nakagomi O."/>
            <person name="Nakagomi T."/>
            <person name="Ueda S."/>
        </authorList>
    </citation>
    <scope>NUCLEOTIDE SEQUENCE [MRNA]</scope>
</reference>
<sequence length="775" mass="87139">MASLIYRQLLSNSYVTNISDEVNEIGTKKTTNVTVNPGPFAQTGYAPVDWGHGELPDSTLVQPTLDGPYQPTSLNLPVDYWMLIAPTREGRVAEGTNTTDRWFACVLVEPNVQNTQRQYVLDGQNVQLQVSNDSSTSWKFILFIKLTPDGTYTQYSTLSTPHKLCSWMKRDNRVYWYQGSSPNASESYYLTINNDNSNVSSDAEFYLIPQSQTAMCTQYINNGLPPIQNTRNIVPVNIASRQIKDIRAQMNEDIVISKTSLWKEMQYNRDIIIRFKFANSIIKSGGLGYKWSEISFKPMNYQYTYTRDGEEVTAHTTCSVNGVNDFNYNGGTLPTDFAISRFEVIKENSYVYVDYWDDSQAFRNMVYVRSLAANLNDVVCSGGSYSFALPVGNHPVMSGGAVTLTSAGVTLSTQYTDYVSLNSLRFRFRLAVSEPSFSISRTRMSGIYGLPAVNPNNNAEYYEIAGRFSLISLVPTNDDYQTPIANSVTVRQDLERQLGELREEFNSLSQEIAVSQLIDLATLPLDMFSMFSGIKSTVEAVKSMTTNVMKRFKTSSLANAISDLTSNMSEAASSVRLTSVRSIGTVTLPRARVSLQVSDDLRSMQDVSTQVSNVSRNLRLKEFTTQTDTLSFDDISAAVLKTKLDKSTQISQQTMPDIIAESSEKFIPKRSYRIVDEDTAFETGIDGTFYAYKVDTFNEIPFDMERFNKLITDSPVLSAIIDFKTLKNLNDNYGITKKQAMELLHSNPKTLKEFINNNNPIIRNRIENLISQCRL</sequence>
<comment type="function">
    <molecule>Outer capsid protein VP4</molecule>
    <text evidence="1">Spike-forming protein that mediates virion attachment to the host epithelial cell receptors and plays a major role in cell penetration, determination of host range restriction and virulence. Rotavirus attachment and entry into the host cell probably involves multiple sequential contacts between the outer capsid proteins VP4 and VP7, and the cell receptors. It is subsequently lost, together with VP7, following virus entry into the host cell. Following entry into the host cell, low intracellular or intravesicular Ca(2+) concentration probably causes the calcium-stabilized VP7 trimers to dissociate from the virion. This step is probably necessary for the membrane-disrupting entry step and the release of VP4, which is locked onto the virion by VP7. During the virus exit from the host cell, VP4 seems to be required to target the newly formed virions to the host cell lipid rafts.</text>
</comment>
<comment type="function">
    <molecule>Outer capsid protein VP5*</molecule>
    <text evidence="1">Forms the spike 'foot' and 'body' and acts as a membrane permeabilization protein that mediates release of viral particles from endosomal compartments into the cytoplasm. During entry, the part of VP5* that protrudes from the virus folds back on itself and reorganizes from a local dimer to a trimer. This reorganization may be linked to membrane penetration by exposing VP5* hydrophobic region. In integrin-dependent strains, VP5* targets the integrin heterodimer ITGA2/ITGB1 for cell attachment.</text>
</comment>
<comment type="function">
    <molecule>Outer capsid protein VP8*</molecule>
    <text evidence="1">Forms the head of the spikes and mediates the recognition of specific host cell surface glycans. It is the viral hemagglutinin and an important target of neutralizing antibodies. In sialic acid-dependent strains, VP8* binds to host cell sialic acid, most probably a ganglioside, providing the initial contact. In some other strains, VP8* mediates the attachment to histo-blood group antigens (HBGAs) for viral entry.</text>
</comment>
<comment type="subunit">
    <molecule>Outer capsid protein VP4</molecule>
    <text evidence="1">Homotrimer. VP4 adopts a dimeric appearance above the capsid surface, while forming a trimeric base anchored inside the capsid layer. Only hints of the third molecule are observed above the capsid surface. It probably performs a series of molecular rearrangements during viral entry. Prior to trypsin cleavage, it is flexible. The priming trypsin cleavage triggers its rearrangement into rigid spikes with approximate two-fold symmetry of their protruding parts. After an unknown second triggering event, cleaved VP4 may undergo another rearrangement, in which two VP5* subunits fold back on themselves and join a third subunit to form a tightly associated trimer, shaped like a folded umbrella. Interacts with VP6. Interacts with VP7.</text>
</comment>
<comment type="subunit">
    <molecule>Outer capsid protein VP5*</molecule>
    <text evidence="1">Homotrimer. The trimer is coiled-coil stabilized by its C-terminus, however, its N-terminus, known as antigen domain or 'body', seems to be flexible allowing it to self-associate either as a dimer or a trimer.</text>
</comment>
<comment type="subcellular location">
    <molecule>Outer capsid protein VP4</molecule>
    <subcellularLocation>
        <location evidence="1">Virion</location>
    </subcellularLocation>
    <subcellularLocation>
        <location evidence="1">Host rough endoplasmic reticulum</location>
    </subcellularLocation>
    <subcellularLocation>
        <location evidence="1">Host cell membrane</location>
    </subcellularLocation>
    <subcellularLocation>
        <location evidence="1">Host cytoplasm</location>
        <location evidence="1">Host cytoskeleton</location>
    </subcellularLocation>
    <subcellularLocation>
        <location evidence="1">Host endoplasmic reticulum-Golgi intermediate compartment</location>
    </subcellularLocation>
    <text evidence="1">The outer layer contains 180 copies of VP4, grouped as 60 dimers. Immature double-layered particles assembled in the cytoplasm bud across the membrane of the endoplasmic reticulum, acquiring during this process a transient lipid membrane that is modified with the ER resident viral glycoproteins NSP4 and VP7; these enveloped particles also contain VP4. As the particles move towards the interior of the ER cisternae, the transient lipid membrane and the non-structural protein NSP4 are lost, while the virus surface proteins VP4 and VP7 rearrange to form the outermost virus protein layer, yielding mature infectious triple-layered particles. VP4 also seems to associate with lipid rafts of the host cell membrane probably for the exit of the virus from the infected cell by an alternate pathway.</text>
</comment>
<comment type="subcellular location">
    <molecule>Outer capsid protein VP8*</molecule>
    <subcellularLocation>
        <location evidence="1">Virion</location>
    </subcellularLocation>
    <text evidence="1">Outer capsid protein.</text>
</comment>
<comment type="subcellular location">
    <molecule>Outer capsid protein VP5*</molecule>
    <subcellularLocation>
        <location evidence="1">Virion</location>
    </subcellularLocation>
    <text evidence="1">Outer capsid protein.</text>
</comment>
<comment type="domain">
    <molecule>Outer capsid protein VP4</molecule>
    <text evidence="1">The VP4 spike is divided into a foot, a stalk and body, and a head.</text>
</comment>
<comment type="PTM">
    <molecule>Outer capsid protein VP4</molecule>
    <text evidence="1">Proteolytic cleavage by trypsin results in activation of VP4 functions and greatly increases infectivity. The penetration into the host cell is dependent on trypsin treatment of VP4. It produces two peptides, VP5* and VP8* that remain associated with the virion. Cleavage of VP4 by trypsin probably occurs in vivo in the lumen of the intestine prior to infection of enterocytes. Trypsin seems to be incorporated into the three-layered viral particles but remains inactive as long as the viral outer capsid is intact and would only be activated upon the solubilization of the latter.</text>
</comment>
<comment type="miscellaneous">
    <text evidence="1">In group A rotaviruses, VP4 defines the P serotype.</text>
</comment>
<comment type="miscellaneous">
    <text evidence="1">Some rotavirus strains are neuraminidase-sensitive and require sialic acid to attach to the cell surface. Some rotavirus strains are integrin-dependent. Some rotavirus strains depend on ganglioside for their entry into the host cell. Hsp70 also seems to be involved in the entry of some strains.</text>
</comment>
<comment type="similarity">
    <text evidence="1">Belongs to the rotavirus VP4 family.</text>
</comment>